<organism>
    <name type="scientific">Klebsiella pneumoniae (strain 342)</name>
    <dbReference type="NCBI Taxonomy" id="507522"/>
    <lineage>
        <taxon>Bacteria</taxon>
        <taxon>Pseudomonadati</taxon>
        <taxon>Pseudomonadota</taxon>
        <taxon>Gammaproteobacteria</taxon>
        <taxon>Enterobacterales</taxon>
        <taxon>Enterobacteriaceae</taxon>
        <taxon>Klebsiella/Raoultella group</taxon>
        <taxon>Klebsiella</taxon>
        <taxon>Klebsiella pneumoniae complex</taxon>
    </lineage>
</organism>
<proteinExistence type="inferred from homology"/>
<keyword id="KW-0687">Ribonucleoprotein</keyword>
<keyword id="KW-0689">Ribosomal protein</keyword>
<keyword id="KW-0694">RNA-binding</keyword>
<keyword id="KW-0699">rRNA-binding</keyword>
<gene>
    <name evidence="1" type="primary">rplF</name>
    <name type="ordered locus">KPK_0413</name>
</gene>
<accession>B5XNA8</accession>
<reference key="1">
    <citation type="journal article" date="2008" name="PLoS Genet.">
        <title>Complete genome sequence of the N2-fixing broad host range endophyte Klebsiella pneumoniae 342 and virulence predictions verified in mice.</title>
        <authorList>
            <person name="Fouts D.E."/>
            <person name="Tyler H.L."/>
            <person name="DeBoy R.T."/>
            <person name="Daugherty S."/>
            <person name="Ren Q."/>
            <person name="Badger J.H."/>
            <person name="Durkin A.S."/>
            <person name="Huot H."/>
            <person name="Shrivastava S."/>
            <person name="Kothari S."/>
            <person name="Dodson R.J."/>
            <person name="Mohamoud Y."/>
            <person name="Khouri H."/>
            <person name="Roesch L.F.W."/>
            <person name="Krogfelt K.A."/>
            <person name="Struve C."/>
            <person name="Triplett E.W."/>
            <person name="Methe B.A."/>
        </authorList>
    </citation>
    <scope>NUCLEOTIDE SEQUENCE [LARGE SCALE GENOMIC DNA]</scope>
    <source>
        <strain>342</strain>
    </source>
</reference>
<evidence type="ECO:0000255" key="1">
    <source>
        <dbReference type="HAMAP-Rule" id="MF_01365"/>
    </source>
</evidence>
<evidence type="ECO:0000305" key="2"/>
<name>RL6_KLEP3</name>
<sequence length="177" mass="18873">MSRVAKAPVVVPAGVDVKVNGQVITIKGKNGELTRTLNDAVEVKHADNALTFGPRDGYVDGWAQAGTARALLNSMVIGVTEGFTKKLQLVGVGYRAAVKGDVVNLALGFSHPVEHKLPAGITAECPTQTEIVLKGADKQVIGQVAADLRAYRRPEPYKGKGVRYADEVVRTKEAKKK</sequence>
<dbReference type="EMBL" id="CP000964">
    <property type="protein sequence ID" value="ACI10082.1"/>
    <property type="molecule type" value="Genomic_DNA"/>
</dbReference>
<dbReference type="SMR" id="B5XNA8"/>
<dbReference type="KEGG" id="kpe:KPK_0413"/>
<dbReference type="HOGENOM" id="CLU_065464_1_2_6"/>
<dbReference type="Proteomes" id="UP000001734">
    <property type="component" value="Chromosome"/>
</dbReference>
<dbReference type="GO" id="GO:0022625">
    <property type="term" value="C:cytosolic large ribosomal subunit"/>
    <property type="evidence" value="ECO:0007669"/>
    <property type="project" value="TreeGrafter"/>
</dbReference>
<dbReference type="GO" id="GO:0019843">
    <property type="term" value="F:rRNA binding"/>
    <property type="evidence" value="ECO:0007669"/>
    <property type="project" value="UniProtKB-UniRule"/>
</dbReference>
<dbReference type="GO" id="GO:0003735">
    <property type="term" value="F:structural constituent of ribosome"/>
    <property type="evidence" value="ECO:0007669"/>
    <property type="project" value="InterPro"/>
</dbReference>
<dbReference type="GO" id="GO:0002181">
    <property type="term" value="P:cytoplasmic translation"/>
    <property type="evidence" value="ECO:0007669"/>
    <property type="project" value="TreeGrafter"/>
</dbReference>
<dbReference type="FunFam" id="3.90.930.12:FF:000001">
    <property type="entry name" value="50S ribosomal protein L6"/>
    <property type="match status" value="1"/>
</dbReference>
<dbReference type="FunFam" id="3.90.930.12:FF:000002">
    <property type="entry name" value="50S ribosomal protein L6"/>
    <property type="match status" value="1"/>
</dbReference>
<dbReference type="Gene3D" id="3.90.930.12">
    <property type="entry name" value="Ribosomal protein L6, alpha-beta domain"/>
    <property type="match status" value="2"/>
</dbReference>
<dbReference type="HAMAP" id="MF_01365_B">
    <property type="entry name" value="Ribosomal_uL6_B"/>
    <property type="match status" value="1"/>
</dbReference>
<dbReference type="InterPro" id="IPR000702">
    <property type="entry name" value="Ribosomal_uL6-like"/>
</dbReference>
<dbReference type="InterPro" id="IPR036789">
    <property type="entry name" value="Ribosomal_uL6-like_a/b-dom_sf"/>
</dbReference>
<dbReference type="InterPro" id="IPR020040">
    <property type="entry name" value="Ribosomal_uL6_a/b-dom"/>
</dbReference>
<dbReference type="InterPro" id="IPR019906">
    <property type="entry name" value="Ribosomal_uL6_bac-type"/>
</dbReference>
<dbReference type="InterPro" id="IPR002358">
    <property type="entry name" value="Ribosomal_uL6_CS"/>
</dbReference>
<dbReference type="NCBIfam" id="TIGR03654">
    <property type="entry name" value="L6_bact"/>
    <property type="match status" value="1"/>
</dbReference>
<dbReference type="PANTHER" id="PTHR11655">
    <property type="entry name" value="60S/50S RIBOSOMAL PROTEIN L6/L9"/>
    <property type="match status" value="1"/>
</dbReference>
<dbReference type="PANTHER" id="PTHR11655:SF14">
    <property type="entry name" value="LARGE RIBOSOMAL SUBUNIT PROTEIN UL6M"/>
    <property type="match status" value="1"/>
</dbReference>
<dbReference type="Pfam" id="PF00347">
    <property type="entry name" value="Ribosomal_L6"/>
    <property type="match status" value="2"/>
</dbReference>
<dbReference type="PIRSF" id="PIRSF002162">
    <property type="entry name" value="Ribosomal_L6"/>
    <property type="match status" value="1"/>
</dbReference>
<dbReference type="PRINTS" id="PR00059">
    <property type="entry name" value="RIBOSOMALL6"/>
</dbReference>
<dbReference type="SUPFAM" id="SSF56053">
    <property type="entry name" value="Ribosomal protein L6"/>
    <property type="match status" value="2"/>
</dbReference>
<dbReference type="PROSITE" id="PS00525">
    <property type="entry name" value="RIBOSOMAL_L6_1"/>
    <property type="match status" value="1"/>
</dbReference>
<protein>
    <recommendedName>
        <fullName evidence="1">Large ribosomal subunit protein uL6</fullName>
    </recommendedName>
    <alternativeName>
        <fullName evidence="2">50S ribosomal protein L6</fullName>
    </alternativeName>
</protein>
<feature type="chain" id="PRO_1000144003" description="Large ribosomal subunit protein uL6">
    <location>
        <begin position="1"/>
        <end position="177"/>
    </location>
</feature>
<comment type="function">
    <text evidence="1">This protein binds to the 23S rRNA, and is important in its secondary structure. It is located near the subunit interface in the base of the L7/L12 stalk, and near the tRNA binding site of the peptidyltransferase center.</text>
</comment>
<comment type="subunit">
    <text evidence="1">Part of the 50S ribosomal subunit.</text>
</comment>
<comment type="similarity">
    <text evidence="1">Belongs to the universal ribosomal protein uL6 family.</text>
</comment>